<dbReference type="EC" id="3.4.11.1" evidence="1"/>
<dbReference type="EC" id="3.4.11.10" evidence="1"/>
<dbReference type="EMBL" id="CP000083">
    <property type="protein sequence ID" value="AAZ25648.1"/>
    <property type="molecule type" value="Genomic_DNA"/>
</dbReference>
<dbReference type="RefSeq" id="WP_011041590.1">
    <property type="nucleotide sequence ID" value="NC_003910.7"/>
</dbReference>
<dbReference type="SMR" id="Q488M4"/>
<dbReference type="STRING" id="167879.CPS_0740"/>
<dbReference type="MEROPS" id="M17.003"/>
<dbReference type="KEGG" id="cps:CPS_0740"/>
<dbReference type="eggNOG" id="COG0260">
    <property type="taxonomic scope" value="Bacteria"/>
</dbReference>
<dbReference type="HOGENOM" id="CLU_013734_0_0_6"/>
<dbReference type="Proteomes" id="UP000000547">
    <property type="component" value="Chromosome"/>
</dbReference>
<dbReference type="GO" id="GO:0005737">
    <property type="term" value="C:cytoplasm"/>
    <property type="evidence" value="ECO:0007669"/>
    <property type="project" value="UniProtKB-SubCell"/>
</dbReference>
<dbReference type="GO" id="GO:0030145">
    <property type="term" value="F:manganese ion binding"/>
    <property type="evidence" value="ECO:0007669"/>
    <property type="project" value="UniProtKB-UniRule"/>
</dbReference>
<dbReference type="GO" id="GO:0070006">
    <property type="term" value="F:metalloaminopeptidase activity"/>
    <property type="evidence" value="ECO:0007669"/>
    <property type="project" value="InterPro"/>
</dbReference>
<dbReference type="GO" id="GO:0006508">
    <property type="term" value="P:proteolysis"/>
    <property type="evidence" value="ECO:0007669"/>
    <property type="project" value="UniProtKB-KW"/>
</dbReference>
<dbReference type="CDD" id="cd00433">
    <property type="entry name" value="Peptidase_M17"/>
    <property type="match status" value="1"/>
</dbReference>
<dbReference type="FunFam" id="3.40.220.10:FF:000001">
    <property type="entry name" value="Probable cytosol aminopeptidase"/>
    <property type="match status" value="1"/>
</dbReference>
<dbReference type="FunFam" id="3.40.630.10:FF:000004">
    <property type="entry name" value="Probable cytosol aminopeptidase"/>
    <property type="match status" value="1"/>
</dbReference>
<dbReference type="Gene3D" id="3.40.220.10">
    <property type="entry name" value="Leucine Aminopeptidase, subunit E, domain 1"/>
    <property type="match status" value="1"/>
</dbReference>
<dbReference type="Gene3D" id="3.40.630.10">
    <property type="entry name" value="Zn peptidases"/>
    <property type="match status" value="1"/>
</dbReference>
<dbReference type="HAMAP" id="MF_00181">
    <property type="entry name" value="Cytosol_peptidase_M17"/>
    <property type="match status" value="1"/>
</dbReference>
<dbReference type="InterPro" id="IPR011356">
    <property type="entry name" value="Leucine_aapep/pepB"/>
</dbReference>
<dbReference type="InterPro" id="IPR043472">
    <property type="entry name" value="Macro_dom-like"/>
</dbReference>
<dbReference type="InterPro" id="IPR000819">
    <property type="entry name" value="Peptidase_M17_C"/>
</dbReference>
<dbReference type="InterPro" id="IPR023042">
    <property type="entry name" value="Peptidase_M17_leu_NH2_pept"/>
</dbReference>
<dbReference type="InterPro" id="IPR008283">
    <property type="entry name" value="Peptidase_M17_N"/>
</dbReference>
<dbReference type="NCBIfam" id="NF002072">
    <property type="entry name" value="PRK00913.1-1"/>
    <property type="match status" value="1"/>
</dbReference>
<dbReference type="NCBIfam" id="NF002073">
    <property type="entry name" value="PRK00913.1-2"/>
    <property type="match status" value="1"/>
</dbReference>
<dbReference type="NCBIfam" id="NF002074">
    <property type="entry name" value="PRK00913.1-4"/>
    <property type="match status" value="1"/>
</dbReference>
<dbReference type="PANTHER" id="PTHR11963:SF23">
    <property type="entry name" value="CYTOSOL AMINOPEPTIDASE"/>
    <property type="match status" value="1"/>
</dbReference>
<dbReference type="PANTHER" id="PTHR11963">
    <property type="entry name" value="LEUCINE AMINOPEPTIDASE-RELATED"/>
    <property type="match status" value="1"/>
</dbReference>
<dbReference type="Pfam" id="PF00883">
    <property type="entry name" value="Peptidase_M17"/>
    <property type="match status" value="1"/>
</dbReference>
<dbReference type="Pfam" id="PF02789">
    <property type="entry name" value="Peptidase_M17_N"/>
    <property type="match status" value="1"/>
</dbReference>
<dbReference type="PRINTS" id="PR00481">
    <property type="entry name" value="LAMNOPPTDASE"/>
</dbReference>
<dbReference type="SUPFAM" id="SSF52949">
    <property type="entry name" value="Macro domain-like"/>
    <property type="match status" value="1"/>
</dbReference>
<dbReference type="SUPFAM" id="SSF53187">
    <property type="entry name" value="Zn-dependent exopeptidases"/>
    <property type="match status" value="1"/>
</dbReference>
<dbReference type="PROSITE" id="PS00631">
    <property type="entry name" value="CYTOSOL_AP"/>
    <property type="match status" value="1"/>
</dbReference>
<feature type="chain" id="PRO_1000019911" description="Probable cytosol aminopeptidase">
    <location>
        <begin position="1"/>
        <end position="501"/>
    </location>
</feature>
<feature type="active site" evidence="1">
    <location>
        <position position="280"/>
    </location>
</feature>
<feature type="active site" evidence="1">
    <location>
        <position position="354"/>
    </location>
</feature>
<feature type="binding site" evidence="1">
    <location>
        <position position="268"/>
    </location>
    <ligand>
        <name>Mn(2+)</name>
        <dbReference type="ChEBI" id="CHEBI:29035"/>
        <label>2</label>
    </ligand>
</feature>
<feature type="binding site" evidence="1">
    <location>
        <position position="273"/>
    </location>
    <ligand>
        <name>Mn(2+)</name>
        <dbReference type="ChEBI" id="CHEBI:29035"/>
        <label>1</label>
    </ligand>
</feature>
<feature type="binding site" evidence="1">
    <location>
        <position position="273"/>
    </location>
    <ligand>
        <name>Mn(2+)</name>
        <dbReference type="ChEBI" id="CHEBI:29035"/>
        <label>2</label>
    </ligand>
</feature>
<feature type="binding site" evidence="1">
    <location>
        <position position="291"/>
    </location>
    <ligand>
        <name>Mn(2+)</name>
        <dbReference type="ChEBI" id="CHEBI:29035"/>
        <label>2</label>
    </ligand>
</feature>
<feature type="binding site" evidence="1">
    <location>
        <position position="350"/>
    </location>
    <ligand>
        <name>Mn(2+)</name>
        <dbReference type="ChEBI" id="CHEBI:29035"/>
        <label>1</label>
    </ligand>
</feature>
<feature type="binding site" evidence="1">
    <location>
        <position position="352"/>
    </location>
    <ligand>
        <name>Mn(2+)</name>
        <dbReference type="ChEBI" id="CHEBI:29035"/>
        <label>1</label>
    </ligand>
</feature>
<feature type="binding site" evidence="1">
    <location>
        <position position="352"/>
    </location>
    <ligand>
        <name>Mn(2+)</name>
        <dbReference type="ChEBI" id="CHEBI:29035"/>
        <label>2</label>
    </ligand>
</feature>
<comment type="function">
    <text evidence="1">Presumably involved in the processing and regular turnover of intracellular proteins. Catalyzes the removal of unsubstituted N-terminal amino acids from various peptides.</text>
</comment>
<comment type="catalytic activity">
    <reaction evidence="1">
        <text>Release of an N-terminal amino acid, Xaa-|-Yaa-, in which Xaa is preferably Leu, but may be other amino acids including Pro although not Arg or Lys, and Yaa may be Pro. Amino acid amides and methyl esters are also readily hydrolyzed, but rates on arylamides are exceedingly low.</text>
        <dbReference type="EC" id="3.4.11.1"/>
    </reaction>
</comment>
<comment type="catalytic activity">
    <reaction evidence="1">
        <text>Release of an N-terminal amino acid, preferentially leucine, but not glutamic or aspartic acids.</text>
        <dbReference type="EC" id="3.4.11.10"/>
    </reaction>
</comment>
<comment type="cofactor">
    <cofactor evidence="1">
        <name>Mn(2+)</name>
        <dbReference type="ChEBI" id="CHEBI:29035"/>
    </cofactor>
    <text evidence="1">Binds 2 manganese ions per subunit.</text>
</comment>
<comment type="subcellular location">
    <subcellularLocation>
        <location evidence="1">Cytoplasm</location>
    </subcellularLocation>
</comment>
<comment type="similarity">
    <text evidence="1">Belongs to the peptidase M17 family.</text>
</comment>
<keyword id="KW-0031">Aminopeptidase</keyword>
<keyword id="KW-0963">Cytoplasm</keyword>
<keyword id="KW-0378">Hydrolase</keyword>
<keyword id="KW-0464">Manganese</keyword>
<keyword id="KW-0479">Metal-binding</keyword>
<keyword id="KW-0645">Protease</keyword>
<protein>
    <recommendedName>
        <fullName evidence="1">Probable cytosol aminopeptidase</fullName>
        <ecNumber evidence="1">3.4.11.1</ecNumber>
    </recommendedName>
    <alternativeName>
        <fullName evidence="1">Leucine aminopeptidase</fullName>
        <shortName evidence="1">LAP</shortName>
        <ecNumber evidence="1">3.4.11.10</ecNumber>
    </alternativeName>
    <alternativeName>
        <fullName evidence="1">Leucyl aminopeptidase</fullName>
    </alternativeName>
</protein>
<evidence type="ECO:0000255" key="1">
    <source>
        <dbReference type="HAMAP-Rule" id="MF_00181"/>
    </source>
</evidence>
<accession>Q488M4</accession>
<organism>
    <name type="scientific">Colwellia psychrerythraea (strain 34H / ATCC BAA-681)</name>
    <name type="common">Vibrio psychroerythus</name>
    <dbReference type="NCBI Taxonomy" id="167879"/>
    <lineage>
        <taxon>Bacteria</taxon>
        <taxon>Pseudomonadati</taxon>
        <taxon>Pseudomonadota</taxon>
        <taxon>Gammaproteobacteria</taxon>
        <taxon>Alteromonadales</taxon>
        <taxon>Colwelliaceae</taxon>
        <taxon>Colwellia</taxon>
    </lineage>
</organism>
<gene>
    <name evidence="1" type="primary">pepA</name>
    <name type="ordered locus">CPS_0740</name>
</gene>
<reference key="1">
    <citation type="journal article" date="2005" name="Proc. Natl. Acad. Sci. U.S.A.">
        <title>The psychrophilic lifestyle as revealed by the genome sequence of Colwellia psychrerythraea 34H through genomic and proteomic analyses.</title>
        <authorList>
            <person name="Methe B.A."/>
            <person name="Nelson K.E."/>
            <person name="Deming J.W."/>
            <person name="Momen B."/>
            <person name="Melamud E."/>
            <person name="Zhang X."/>
            <person name="Moult J."/>
            <person name="Madupu R."/>
            <person name="Nelson W.C."/>
            <person name="Dodson R.J."/>
            <person name="Brinkac L.M."/>
            <person name="Daugherty S.C."/>
            <person name="Durkin A.S."/>
            <person name="DeBoy R.T."/>
            <person name="Kolonay J.F."/>
            <person name="Sullivan S.A."/>
            <person name="Zhou L."/>
            <person name="Davidsen T.M."/>
            <person name="Wu M."/>
            <person name="Huston A.L."/>
            <person name="Lewis M."/>
            <person name="Weaver B."/>
            <person name="Weidman J.F."/>
            <person name="Khouri H."/>
            <person name="Utterback T.R."/>
            <person name="Feldblyum T.V."/>
            <person name="Fraser C.M."/>
        </authorList>
    </citation>
    <scope>NUCLEOTIDE SEQUENCE [LARGE SCALE GENOMIC DNA]</scope>
    <source>
        <strain>34H / ATCC BAA-681</strain>
    </source>
</reference>
<name>AMPA_COLP3</name>
<proteinExistence type="inferred from homology"/>
<sequence>MEFSVKSGSPEKQRSACIVVGVFEPRRLSGTAEQLDEISEGYISNLLRKGDLEGKSGQMLLLHHVPNILSERVLLVGCGKERELDERQYRQIITKTINTLNETGSMEAVCFLSELHVKGRDIYWKVRQAVEAAQDGLYSFDSLKTRKAEARRPLRKVVFNVPTRRELPIGERAVSHALAIAEGITTCKNVANMPPNICNPAYLAEQAKILENDYDKVTTTIVDEKEMEELGMGSYLAVGRGSVNESLMSIIKYDGAGDDSKPLVLVGKGLTFDSGGISLKPGAGMDEMKYDMGGAAGVLGAMHALVELNLPINVIGVLAGCENMPSSNAYRPGDILTTMSGQTVEVLNTDAEGRLVLCDALTYVERFNPEAVIDVATLTGACVVALGAHATGLLSSHNPLAHELLNASEQSGDRAWRMPLWDDYQDQLESPFADFTNLGGKEAGTITAACFLSRFTKKYNWAHLDIAGTAWRSGKNKGATGRPVSMLTQFLLNRSGQEQGE</sequence>